<keyword id="KW-0378">Hydrolase</keyword>
<accession>A0PNR5</accession>
<feature type="chain" id="PRO_1000066427" description="Deoxyguanosinetriphosphate triphosphohydrolase-like protein">
    <location>
        <begin position="1"/>
        <end position="425"/>
    </location>
</feature>
<feature type="domain" description="HD" evidence="2">
    <location>
        <begin position="72"/>
        <end position="218"/>
    </location>
</feature>
<feature type="region of interest" description="Disordered" evidence="3">
    <location>
        <begin position="1"/>
        <end position="35"/>
    </location>
</feature>
<feature type="compositionally biased region" description="Basic and acidic residues" evidence="3">
    <location>
        <begin position="11"/>
        <end position="20"/>
    </location>
</feature>
<evidence type="ECO:0000255" key="1">
    <source>
        <dbReference type="HAMAP-Rule" id="MF_01212"/>
    </source>
</evidence>
<evidence type="ECO:0000255" key="2">
    <source>
        <dbReference type="PROSITE-ProRule" id="PRU01175"/>
    </source>
</evidence>
<evidence type="ECO:0000256" key="3">
    <source>
        <dbReference type="SAM" id="MobiDB-lite"/>
    </source>
</evidence>
<sequence length="425" mass="46129">MSTKQQEPYGDFDRQRRVVEAPKTAGLPGTEGQHRTDFARDRARVLHCAALRRLADKTQVVGPREGDTPRTRLTHSLEVAQIGRGMAIGLGCDLDLVELAGLAHDIGHPPYGHNGERALDEVAIGCGGFEGNAQNFRILTSLEPKVLDEHGLSVGLNLTRAALDAVTKYPWPRGRARRKFGFYDQDLQPALWVRQGAPQRRPCLEAQVMDWADDVAYSVHDVEDGVVSERIDLRVLADHDEAAALAKLGESEFSRVSADELMEAAGRLSGLPVVAAVGKYDATLAASVALKQLTSELVGRFASAAIATTRAAAGPGPLVRYQADLHVPELVRAEVAVLKILALQFIMSDPRHLETQARQRERIHRVAQLLYAGAPRTLDPIFAAAFNAAGDDGARMRVVVDQIASYTEGRLERIDAAQLGDGRVG</sequence>
<dbReference type="EMBL" id="CP000325">
    <property type="protein sequence ID" value="ABL03984.1"/>
    <property type="molecule type" value="Genomic_DNA"/>
</dbReference>
<dbReference type="RefSeq" id="WP_011739604.1">
    <property type="nucleotide sequence ID" value="NC_008611.1"/>
</dbReference>
<dbReference type="SMR" id="A0PNR5"/>
<dbReference type="KEGG" id="mul:MUL_1458"/>
<dbReference type="eggNOG" id="COG0232">
    <property type="taxonomic scope" value="Bacteria"/>
</dbReference>
<dbReference type="HOGENOM" id="CLU_028163_0_1_11"/>
<dbReference type="Proteomes" id="UP000000765">
    <property type="component" value="Chromosome"/>
</dbReference>
<dbReference type="GO" id="GO:0008832">
    <property type="term" value="F:dGTPase activity"/>
    <property type="evidence" value="ECO:0007669"/>
    <property type="project" value="TreeGrafter"/>
</dbReference>
<dbReference type="GO" id="GO:0006203">
    <property type="term" value="P:dGTP catabolic process"/>
    <property type="evidence" value="ECO:0007669"/>
    <property type="project" value="TreeGrafter"/>
</dbReference>
<dbReference type="CDD" id="cd00077">
    <property type="entry name" value="HDc"/>
    <property type="match status" value="1"/>
</dbReference>
<dbReference type="Gene3D" id="1.10.3210.10">
    <property type="entry name" value="Hypothetical protein af1432"/>
    <property type="match status" value="1"/>
</dbReference>
<dbReference type="HAMAP" id="MF_01212">
    <property type="entry name" value="dGTPase_type2"/>
    <property type="match status" value="1"/>
</dbReference>
<dbReference type="InterPro" id="IPR006261">
    <property type="entry name" value="dGTPase"/>
</dbReference>
<dbReference type="InterPro" id="IPR050135">
    <property type="entry name" value="dGTPase-like"/>
</dbReference>
<dbReference type="InterPro" id="IPR023023">
    <property type="entry name" value="dNTPase_2"/>
</dbReference>
<dbReference type="InterPro" id="IPR003607">
    <property type="entry name" value="HD/PDEase_dom"/>
</dbReference>
<dbReference type="InterPro" id="IPR006674">
    <property type="entry name" value="HD_domain"/>
</dbReference>
<dbReference type="InterPro" id="IPR026875">
    <property type="entry name" value="PHydrolase_assoc_dom"/>
</dbReference>
<dbReference type="NCBIfam" id="TIGR01353">
    <property type="entry name" value="dGTP_triPase"/>
    <property type="match status" value="1"/>
</dbReference>
<dbReference type="NCBIfam" id="NF002829">
    <property type="entry name" value="PRK03007.1"/>
    <property type="match status" value="1"/>
</dbReference>
<dbReference type="PANTHER" id="PTHR11373:SF32">
    <property type="entry name" value="DEOXYGUANOSINETRIPHOSPHATE TRIPHOSPHOHYDROLASE"/>
    <property type="match status" value="1"/>
</dbReference>
<dbReference type="PANTHER" id="PTHR11373">
    <property type="entry name" value="DEOXYNUCLEOSIDE TRIPHOSPHATE TRIPHOSPHOHYDROLASE"/>
    <property type="match status" value="1"/>
</dbReference>
<dbReference type="Pfam" id="PF01966">
    <property type="entry name" value="HD"/>
    <property type="match status" value="1"/>
</dbReference>
<dbReference type="Pfam" id="PF13286">
    <property type="entry name" value="HD_assoc"/>
    <property type="match status" value="1"/>
</dbReference>
<dbReference type="SMART" id="SM00471">
    <property type="entry name" value="HDc"/>
    <property type="match status" value="1"/>
</dbReference>
<dbReference type="SUPFAM" id="SSF109604">
    <property type="entry name" value="HD-domain/PDEase-like"/>
    <property type="match status" value="1"/>
</dbReference>
<dbReference type="PROSITE" id="PS51831">
    <property type="entry name" value="HD"/>
    <property type="match status" value="1"/>
</dbReference>
<gene>
    <name type="ordered locus">MUL_1458</name>
</gene>
<name>DGTL1_MYCUA</name>
<reference key="1">
    <citation type="journal article" date="2007" name="Genome Res.">
        <title>Reductive evolution and niche adaptation inferred from the genome of Mycobacterium ulcerans, the causative agent of Buruli ulcer.</title>
        <authorList>
            <person name="Stinear T.P."/>
            <person name="Seemann T."/>
            <person name="Pidot S."/>
            <person name="Frigui W."/>
            <person name="Reysset G."/>
            <person name="Garnier T."/>
            <person name="Meurice G."/>
            <person name="Simon D."/>
            <person name="Bouchier C."/>
            <person name="Ma L."/>
            <person name="Tichit M."/>
            <person name="Porter J.L."/>
            <person name="Ryan J."/>
            <person name="Johnson P.D.R."/>
            <person name="Davies J.K."/>
            <person name="Jenkin G.A."/>
            <person name="Small P.L.C."/>
            <person name="Jones L.M."/>
            <person name="Tekaia F."/>
            <person name="Laval F."/>
            <person name="Daffe M."/>
            <person name="Parkhill J."/>
            <person name="Cole S.T."/>
        </authorList>
    </citation>
    <scope>NUCLEOTIDE SEQUENCE [LARGE SCALE GENOMIC DNA]</scope>
    <source>
        <strain>Agy99</strain>
    </source>
</reference>
<organism>
    <name type="scientific">Mycobacterium ulcerans (strain Agy99)</name>
    <dbReference type="NCBI Taxonomy" id="362242"/>
    <lineage>
        <taxon>Bacteria</taxon>
        <taxon>Bacillati</taxon>
        <taxon>Actinomycetota</taxon>
        <taxon>Actinomycetes</taxon>
        <taxon>Mycobacteriales</taxon>
        <taxon>Mycobacteriaceae</taxon>
        <taxon>Mycobacterium</taxon>
        <taxon>Mycobacterium ulcerans group</taxon>
    </lineage>
</organism>
<proteinExistence type="inferred from homology"/>
<comment type="similarity">
    <text evidence="1">Belongs to the dGTPase family. Type 2 subfamily.</text>
</comment>
<protein>
    <recommendedName>
        <fullName evidence="1">Deoxyguanosinetriphosphate triphosphohydrolase-like protein</fullName>
    </recommendedName>
</protein>